<sequence>MATVAKINQANRKAKYPTRQYNRCKVCGRPRGYLRKFKMCRVCFRKLASEGQIPGVTKSSW</sequence>
<evidence type="ECO:0000255" key="1">
    <source>
        <dbReference type="HAMAP-Rule" id="MF_01364"/>
    </source>
</evidence>
<evidence type="ECO:0000305" key="2"/>
<name>RS14Z_TREDE</name>
<gene>
    <name evidence="1" type="primary">rpsZ</name>
    <name evidence="1" type="synonym">rpsN</name>
    <name type="ordered locus">TDE_0780</name>
</gene>
<reference key="1">
    <citation type="journal article" date="2004" name="Proc. Natl. Acad. Sci. U.S.A.">
        <title>Comparison of the genome of the oral pathogen Treponema denticola with other spirochete genomes.</title>
        <authorList>
            <person name="Seshadri R."/>
            <person name="Myers G.S.A."/>
            <person name="Tettelin H."/>
            <person name="Eisen J.A."/>
            <person name="Heidelberg J.F."/>
            <person name="Dodson R.J."/>
            <person name="Davidsen T.M."/>
            <person name="DeBoy R.T."/>
            <person name="Fouts D.E."/>
            <person name="Haft D.H."/>
            <person name="Selengut J."/>
            <person name="Ren Q."/>
            <person name="Brinkac L.M."/>
            <person name="Madupu R."/>
            <person name="Kolonay J.F."/>
            <person name="Durkin S.A."/>
            <person name="Daugherty S.C."/>
            <person name="Shetty J."/>
            <person name="Shvartsbeyn A."/>
            <person name="Gebregeorgis E."/>
            <person name="Geer K."/>
            <person name="Tsegaye G."/>
            <person name="Malek J.A."/>
            <person name="Ayodeji B."/>
            <person name="Shatsman S."/>
            <person name="McLeod M.P."/>
            <person name="Smajs D."/>
            <person name="Howell J.K."/>
            <person name="Pal S."/>
            <person name="Amin A."/>
            <person name="Vashisth P."/>
            <person name="McNeill T.Z."/>
            <person name="Xiang Q."/>
            <person name="Sodergren E."/>
            <person name="Baca E."/>
            <person name="Weinstock G.M."/>
            <person name="Norris S.J."/>
            <person name="Fraser C.M."/>
            <person name="Paulsen I.T."/>
        </authorList>
    </citation>
    <scope>NUCLEOTIDE SEQUENCE [LARGE SCALE GENOMIC DNA]</scope>
    <source>
        <strain>ATCC 35405 / DSM 14222 / CIP 103919 / JCM 8153 / KCTC 15104</strain>
    </source>
</reference>
<feature type="chain" id="PRO_0000269156" description="Small ribosomal subunit protein uS14">
    <location>
        <begin position="1"/>
        <end position="61"/>
    </location>
</feature>
<feature type="binding site" evidence="1">
    <location>
        <position position="24"/>
    </location>
    <ligand>
        <name>Zn(2+)</name>
        <dbReference type="ChEBI" id="CHEBI:29105"/>
    </ligand>
</feature>
<feature type="binding site" evidence="1">
    <location>
        <position position="27"/>
    </location>
    <ligand>
        <name>Zn(2+)</name>
        <dbReference type="ChEBI" id="CHEBI:29105"/>
    </ligand>
</feature>
<feature type="binding site" evidence="1">
    <location>
        <position position="40"/>
    </location>
    <ligand>
        <name>Zn(2+)</name>
        <dbReference type="ChEBI" id="CHEBI:29105"/>
    </ligand>
</feature>
<feature type="binding site" evidence="1">
    <location>
        <position position="43"/>
    </location>
    <ligand>
        <name>Zn(2+)</name>
        <dbReference type="ChEBI" id="CHEBI:29105"/>
    </ligand>
</feature>
<protein>
    <recommendedName>
        <fullName evidence="1">Small ribosomal subunit protein uS14</fullName>
    </recommendedName>
    <alternativeName>
        <fullName evidence="2">30S ribosomal protein S14 type Z</fullName>
    </alternativeName>
</protein>
<comment type="function">
    <text evidence="1">Binds 16S rRNA, required for the assembly of 30S particles and may also be responsible for determining the conformation of the 16S rRNA at the A site.</text>
</comment>
<comment type="cofactor">
    <cofactor evidence="1">
        <name>Zn(2+)</name>
        <dbReference type="ChEBI" id="CHEBI:29105"/>
    </cofactor>
    <text evidence="1">Binds 1 zinc ion per subunit.</text>
</comment>
<comment type="subunit">
    <text evidence="1">Part of the 30S ribosomal subunit. Contacts proteins S3 and S10.</text>
</comment>
<comment type="similarity">
    <text evidence="1">Belongs to the universal ribosomal protein uS14 family. Zinc-binding uS14 subfamily.</text>
</comment>
<dbReference type="EMBL" id="AE017226">
    <property type="protein sequence ID" value="AAS11271.1"/>
    <property type="molecule type" value="Genomic_DNA"/>
</dbReference>
<dbReference type="RefSeq" id="NP_971390.1">
    <property type="nucleotide sequence ID" value="NC_002967.9"/>
</dbReference>
<dbReference type="RefSeq" id="WP_002670020.1">
    <property type="nucleotide sequence ID" value="NC_002967.9"/>
</dbReference>
<dbReference type="SMR" id="Q73PL9"/>
<dbReference type="STRING" id="243275.TDE_0780"/>
<dbReference type="PaxDb" id="243275-TDE_0780"/>
<dbReference type="GeneID" id="2740658"/>
<dbReference type="KEGG" id="tde:TDE_0780"/>
<dbReference type="PATRIC" id="fig|243275.7.peg.753"/>
<dbReference type="eggNOG" id="COG0199">
    <property type="taxonomic scope" value="Bacteria"/>
</dbReference>
<dbReference type="HOGENOM" id="CLU_139869_3_0_12"/>
<dbReference type="OrthoDB" id="9810484at2"/>
<dbReference type="Proteomes" id="UP000008212">
    <property type="component" value="Chromosome"/>
</dbReference>
<dbReference type="GO" id="GO:0005737">
    <property type="term" value="C:cytoplasm"/>
    <property type="evidence" value="ECO:0007669"/>
    <property type="project" value="UniProtKB-ARBA"/>
</dbReference>
<dbReference type="GO" id="GO:0015935">
    <property type="term" value="C:small ribosomal subunit"/>
    <property type="evidence" value="ECO:0007669"/>
    <property type="project" value="TreeGrafter"/>
</dbReference>
<dbReference type="GO" id="GO:0019843">
    <property type="term" value="F:rRNA binding"/>
    <property type="evidence" value="ECO:0007669"/>
    <property type="project" value="UniProtKB-UniRule"/>
</dbReference>
<dbReference type="GO" id="GO:0003735">
    <property type="term" value="F:structural constituent of ribosome"/>
    <property type="evidence" value="ECO:0007669"/>
    <property type="project" value="InterPro"/>
</dbReference>
<dbReference type="GO" id="GO:0008270">
    <property type="term" value="F:zinc ion binding"/>
    <property type="evidence" value="ECO:0007669"/>
    <property type="project" value="UniProtKB-UniRule"/>
</dbReference>
<dbReference type="GO" id="GO:0006412">
    <property type="term" value="P:translation"/>
    <property type="evidence" value="ECO:0007669"/>
    <property type="project" value="UniProtKB-UniRule"/>
</dbReference>
<dbReference type="FunFam" id="4.10.830.10:FF:000001">
    <property type="entry name" value="30S ribosomal protein S14 type Z"/>
    <property type="match status" value="1"/>
</dbReference>
<dbReference type="Gene3D" id="4.10.830.10">
    <property type="entry name" value="30s Ribosomal Protein S14, Chain N"/>
    <property type="match status" value="1"/>
</dbReference>
<dbReference type="HAMAP" id="MF_01364_B">
    <property type="entry name" value="Ribosomal_uS14_2_B"/>
    <property type="match status" value="1"/>
</dbReference>
<dbReference type="InterPro" id="IPR001209">
    <property type="entry name" value="Ribosomal_uS14"/>
</dbReference>
<dbReference type="InterPro" id="IPR023053">
    <property type="entry name" value="Ribosomal_uS14_bact"/>
</dbReference>
<dbReference type="InterPro" id="IPR018271">
    <property type="entry name" value="Ribosomal_uS14_CS"/>
</dbReference>
<dbReference type="InterPro" id="IPR043140">
    <property type="entry name" value="Ribosomal_uS14_sf"/>
</dbReference>
<dbReference type="NCBIfam" id="NF005974">
    <property type="entry name" value="PRK08061.1"/>
    <property type="match status" value="1"/>
</dbReference>
<dbReference type="NCBIfam" id="NF006477">
    <property type="entry name" value="PRK08881.1"/>
    <property type="match status" value="1"/>
</dbReference>
<dbReference type="PANTHER" id="PTHR19836">
    <property type="entry name" value="30S RIBOSOMAL PROTEIN S14"/>
    <property type="match status" value="1"/>
</dbReference>
<dbReference type="PANTHER" id="PTHR19836:SF19">
    <property type="entry name" value="SMALL RIBOSOMAL SUBUNIT PROTEIN US14M"/>
    <property type="match status" value="1"/>
</dbReference>
<dbReference type="Pfam" id="PF00253">
    <property type="entry name" value="Ribosomal_S14"/>
    <property type="match status" value="1"/>
</dbReference>
<dbReference type="SUPFAM" id="SSF57716">
    <property type="entry name" value="Glucocorticoid receptor-like (DNA-binding domain)"/>
    <property type="match status" value="1"/>
</dbReference>
<dbReference type="PROSITE" id="PS00527">
    <property type="entry name" value="RIBOSOMAL_S14"/>
    <property type="match status" value="1"/>
</dbReference>
<proteinExistence type="inferred from homology"/>
<organism>
    <name type="scientific">Treponema denticola (strain ATCC 35405 / DSM 14222 / CIP 103919 / JCM 8153 / KCTC 15104)</name>
    <dbReference type="NCBI Taxonomy" id="243275"/>
    <lineage>
        <taxon>Bacteria</taxon>
        <taxon>Pseudomonadati</taxon>
        <taxon>Spirochaetota</taxon>
        <taxon>Spirochaetia</taxon>
        <taxon>Spirochaetales</taxon>
        <taxon>Treponemataceae</taxon>
        <taxon>Treponema</taxon>
    </lineage>
</organism>
<accession>Q73PL9</accession>
<keyword id="KW-0479">Metal-binding</keyword>
<keyword id="KW-1185">Reference proteome</keyword>
<keyword id="KW-0687">Ribonucleoprotein</keyword>
<keyword id="KW-0689">Ribosomal protein</keyword>
<keyword id="KW-0694">RNA-binding</keyword>
<keyword id="KW-0699">rRNA-binding</keyword>
<keyword id="KW-0862">Zinc</keyword>